<sequence>MGRMKVIPEFSNYKIRTPIPIFKNELEIEKYIKGAISYIYSENTAKKLELKKRNDEIKEILNNKNDHEFVEKKIRAIVIQLGDTNLNDRCYLNYLNLYKQPIEFTHGAIMCEKNKYWVAYYASQSLNLDCLNFIIKHKDQFKGLDKDKRIKPIDPKKKISRDLLIGQPITVQCIKEDDLFKFLTVYFNQNGIEFSDSWFSSIVKLIFKGKVYSSDESEKLSTTTTTTTTPNEKYDKKILGEHTVFINKNRDGHLKFSTIPSLLLKISTLMNTGVINEYKQKNYFLETLYNSFPANKHFFNFNEETIQYITNLLLPHLHPLEFKRFNTIPWIIKSKEFIDFIIQHKDFYHLVPSIHKFTKKHENTNLFSASTINDGEEEDDDDDDNDVDGNDDDNNKEKVDDTSNKKDSIVKFKDDITIYLNVRQRFLQFSNFELANYFHTKLLECQKESENQINSNIQSINKEIESLSTSSTNTASSTRSKASSNSNQLKKKEDLEQQIIELQSLLKNKYFSNKEIYYLSFLRALKDCDISTIESIDKVVSIDSDQNNNKFQILFQKSFLENQPLKNGISPEFYDFKKVGPSSHPDVYAEGEYDEHDEYDDYQGKLDNHIDIKDSKFTKDENSRDQLFNYLKSSGFKSFTPSIFCYLLELLLLINTEKSNQQFQEIFKPISTTTTTSTTTTTTTTNLDNINEKIFKLSSDLLIHLVHIVDFKKFSIILDSVNLNRKLILEMIDNCKNKLSFQKRIYEFHDVRSKDYQYDINGHFSTNIKFSDAKDILKKLIDENLFPTSKDWIFIYHSLYISILQSTGVTLNNLLEVNKIYEEHEINYPSVLPNHSNYILDFNNNNNNNNNNNYYGLLNYQPYNNSGNINNESLKNVVSNFVLFYWFHLLDRKLSKLFVRSFSNSNFNEFSSSRLPCLKNSSICRIRSKRHSNTASQIFKSIYELQNFSLLEKYSTFKSYFPEERSYYYNNPSDPFYHPDGSKDFRVLIEEGEFQLAFNHLQLVATKTVSEFPPLTTSRLFQFITLEDVIELINLTTIKNFDESKDESEQQPLLKMWYGKDVKKCKDWILSCAIAKSRLDIVDLLLVKDIEYSTLPSTIEFLTGYKIIKSLFSPECDNQTLEYFLTFSNGIVLPSIKQYLIKDNIATQTKNDVFRVIRHGIGKFELLRTFIPSLGFSSCLIEKMVENRRFETLQYYMEIGLITNEDLTNQQKDQLKYENDLKHLDWVINLNHKKRVNRNQPTFTPNTNSTTATTATPLLQTRSGRTIIPIKK</sequence>
<organism>
    <name type="scientific">Dictyostelium discoideum</name>
    <name type="common">Social amoeba</name>
    <dbReference type="NCBI Taxonomy" id="44689"/>
    <lineage>
        <taxon>Eukaryota</taxon>
        <taxon>Amoebozoa</taxon>
        <taxon>Evosea</taxon>
        <taxon>Eumycetozoa</taxon>
        <taxon>Dictyostelia</taxon>
        <taxon>Dictyosteliales</taxon>
        <taxon>Dictyosteliaceae</taxon>
        <taxon>Dictyostelium</taxon>
    </lineage>
</organism>
<gene>
    <name type="primary">pslA</name>
    <name type="ORF">DDB_G0267410</name>
</gene>
<reference key="1">
    <citation type="journal article" date="2005" name="Nature">
        <title>The genome of the social amoeba Dictyostelium discoideum.</title>
        <authorList>
            <person name="Eichinger L."/>
            <person name="Pachebat J.A."/>
            <person name="Gloeckner G."/>
            <person name="Rajandream M.A."/>
            <person name="Sucgang R."/>
            <person name="Berriman M."/>
            <person name="Song J."/>
            <person name="Olsen R."/>
            <person name="Szafranski K."/>
            <person name="Xu Q."/>
            <person name="Tunggal B."/>
            <person name="Kummerfeld S."/>
            <person name="Madera M."/>
            <person name="Konfortov B.A."/>
            <person name="Rivero F."/>
            <person name="Bankier A.T."/>
            <person name="Lehmann R."/>
            <person name="Hamlin N."/>
            <person name="Davies R."/>
            <person name="Gaudet P."/>
            <person name="Fey P."/>
            <person name="Pilcher K."/>
            <person name="Chen G."/>
            <person name="Saunders D."/>
            <person name="Sodergren E.J."/>
            <person name="Davis P."/>
            <person name="Kerhornou A."/>
            <person name="Nie X."/>
            <person name="Hall N."/>
            <person name="Anjard C."/>
            <person name="Hemphill L."/>
            <person name="Bason N."/>
            <person name="Farbrother P."/>
            <person name="Desany B."/>
            <person name="Just E."/>
            <person name="Morio T."/>
            <person name="Rost R."/>
            <person name="Churcher C.M."/>
            <person name="Cooper J."/>
            <person name="Haydock S."/>
            <person name="van Driessche N."/>
            <person name="Cronin A."/>
            <person name="Goodhead I."/>
            <person name="Muzny D.M."/>
            <person name="Mourier T."/>
            <person name="Pain A."/>
            <person name="Lu M."/>
            <person name="Harper D."/>
            <person name="Lindsay R."/>
            <person name="Hauser H."/>
            <person name="James K.D."/>
            <person name="Quiles M."/>
            <person name="Madan Babu M."/>
            <person name="Saito T."/>
            <person name="Buchrieser C."/>
            <person name="Wardroper A."/>
            <person name="Felder M."/>
            <person name="Thangavelu M."/>
            <person name="Johnson D."/>
            <person name="Knights A."/>
            <person name="Loulseged H."/>
            <person name="Mungall K.L."/>
            <person name="Oliver K."/>
            <person name="Price C."/>
            <person name="Quail M.A."/>
            <person name="Urushihara H."/>
            <person name="Hernandez J."/>
            <person name="Rabbinowitsch E."/>
            <person name="Steffen D."/>
            <person name="Sanders M."/>
            <person name="Ma J."/>
            <person name="Kohara Y."/>
            <person name="Sharp S."/>
            <person name="Simmonds M.N."/>
            <person name="Spiegler S."/>
            <person name="Tivey A."/>
            <person name="Sugano S."/>
            <person name="White B."/>
            <person name="Walker D."/>
            <person name="Woodward J.R."/>
            <person name="Winckler T."/>
            <person name="Tanaka Y."/>
            <person name="Shaulsky G."/>
            <person name="Schleicher M."/>
            <person name="Weinstock G.M."/>
            <person name="Rosenthal A."/>
            <person name="Cox E.C."/>
            <person name="Chisholm R.L."/>
            <person name="Gibbs R.A."/>
            <person name="Loomis W.F."/>
            <person name="Platzer M."/>
            <person name="Kay R.R."/>
            <person name="Williams J.G."/>
            <person name="Dear P.H."/>
            <person name="Noegel A.A."/>
            <person name="Barrell B.G."/>
            <person name="Kuspa A."/>
        </authorList>
    </citation>
    <scope>NUCLEOTIDE SEQUENCE [LARGE SCALE GENOMIC DNA]</scope>
    <source>
        <strain>AX4</strain>
    </source>
</reference>
<reference key="2">
    <citation type="journal article" date="1998" name="Development">
        <title>Identification and analysis of a gene that is essential for morphogenesis and prespore cell differentiation in Dictyostelium.</title>
        <authorList>
            <person name="Yasukawa H."/>
            <person name="Mohanty S."/>
            <person name="Firtel R.A."/>
        </authorList>
    </citation>
    <scope>NUCLEOTIDE SEQUENCE [GENOMIC DNA] OF 4-1272</scope>
    <scope>FUNCTION IN MORPHOGENESIS</scope>
    <scope>SUBCELLULAR LOCATION</scope>
    <scope>DEVELOPMENTAL STAGE</scope>
    <scope>DISRUPTION PHENOTYPE</scope>
    <source>
        <strain>AX3-1</strain>
    </source>
</reference>
<proteinExistence type="evidence at protein level"/>
<accession>Q55FB8</accession>
<accession>O43993</accession>
<protein>
    <recommendedName>
        <fullName>Presporeless protein A</fullName>
    </recommendedName>
</protein>
<feature type="chain" id="PRO_0000327755" description="Presporeless protein A">
    <location>
        <begin position="1"/>
        <end position="1272"/>
    </location>
</feature>
<feature type="region of interest" description="Disordered" evidence="2">
    <location>
        <begin position="369"/>
        <end position="403"/>
    </location>
</feature>
<feature type="region of interest" description="Disordered" evidence="2">
    <location>
        <begin position="468"/>
        <end position="490"/>
    </location>
</feature>
<feature type="short sequence motif" description="Nuclear localization signal" evidence="1">
    <location>
        <begin position="146"/>
        <end position="161"/>
    </location>
</feature>
<feature type="compositionally biased region" description="Acidic residues" evidence="2">
    <location>
        <begin position="374"/>
        <end position="392"/>
    </location>
</feature>
<feature type="compositionally biased region" description="Basic and acidic residues" evidence="2">
    <location>
        <begin position="393"/>
        <end position="403"/>
    </location>
</feature>
<feature type="compositionally biased region" description="Low complexity" evidence="2">
    <location>
        <begin position="468"/>
        <end position="487"/>
    </location>
</feature>
<keyword id="KW-0539">Nucleus</keyword>
<keyword id="KW-1185">Reference proteome</keyword>
<keyword id="KW-0749">Sporulation</keyword>
<comment type="function">
    <text evidence="3">Functions autonomously, very early in the prespore pathway, to control prespore cell differentiation, maybe at the level of transcription. Also required for proper aggregation.</text>
</comment>
<comment type="subcellular location">
    <subcellularLocation>
        <location evidence="3">Nucleus</location>
    </subcellularLocation>
</comment>
<comment type="developmental stage">
    <text evidence="3">Expressed throughout growth and development with a strong peak of expression at 4 hours when aggregation is initiating.</text>
</comment>
<comment type="disruption phenotype">
    <text evidence="3">Cells produce large aggregation streams under conditions in which wild-type cells form discrete aggregates. They are unable to induce prespore differentiation, do not express prespore-specific genes and do not produce mature spores. The vast majority of these cells participate in multicellular development and preferentially localize to the very anterior of the slug and form the prestalk and stalk components.</text>
</comment>
<dbReference type="EMBL" id="AAFI02000003">
    <property type="protein sequence ID" value="EAL73157.1"/>
    <property type="molecule type" value="Genomic_DNA"/>
</dbReference>
<dbReference type="EMBL" id="AF038919">
    <property type="protein sequence ID" value="AAB95479.1"/>
    <property type="molecule type" value="Genomic_DNA"/>
</dbReference>
<dbReference type="PIR" id="T14476">
    <property type="entry name" value="T14476"/>
</dbReference>
<dbReference type="RefSeq" id="XP_647615.1">
    <property type="nucleotide sequence ID" value="XM_642523.1"/>
</dbReference>
<dbReference type="SMR" id="Q55FB8"/>
<dbReference type="FunCoup" id="Q55FB8">
    <property type="interactions" value="380"/>
</dbReference>
<dbReference type="STRING" id="44689.Q55FB8"/>
<dbReference type="PaxDb" id="44689-DDB0191506"/>
<dbReference type="EnsemblProtists" id="EAL73157">
    <property type="protein sequence ID" value="EAL73157"/>
    <property type="gene ID" value="DDB_G0267410"/>
</dbReference>
<dbReference type="GeneID" id="8616427"/>
<dbReference type="KEGG" id="ddi:DDB_G0267410"/>
<dbReference type="dictyBase" id="DDB_G0267410">
    <property type="gene designation" value="pslA"/>
</dbReference>
<dbReference type="VEuPathDB" id="AmoebaDB:DDB_G0267410"/>
<dbReference type="HOGENOM" id="CLU_263868_0_0_1"/>
<dbReference type="InParanoid" id="Q55FB8"/>
<dbReference type="PRO" id="PR:Q55FB8"/>
<dbReference type="Proteomes" id="UP000002195">
    <property type="component" value="Chromosome 1"/>
</dbReference>
<dbReference type="GO" id="GO:0005634">
    <property type="term" value="C:nucleus"/>
    <property type="evidence" value="ECO:0000314"/>
    <property type="project" value="dictyBase"/>
</dbReference>
<dbReference type="GO" id="GO:0030435">
    <property type="term" value="P:sporulation resulting in formation of a cellular spore"/>
    <property type="evidence" value="ECO:0000315"/>
    <property type="project" value="dictyBase"/>
</dbReference>
<dbReference type="PANTHER" id="PTHR32142:SF61">
    <property type="match status" value="1"/>
</dbReference>
<dbReference type="PANTHER" id="PTHR32142">
    <property type="entry name" value="B BOX-TYPE DOMAIN-CONTAINING PROTEIN-RELATED"/>
    <property type="match status" value="1"/>
</dbReference>
<name>PSLA_DICDI</name>
<evidence type="ECO:0000255" key="1"/>
<evidence type="ECO:0000256" key="2">
    <source>
        <dbReference type="SAM" id="MobiDB-lite"/>
    </source>
</evidence>
<evidence type="ECO:0000269" key="3">
    <source>
    </source>
</evidence>